<proteinExistence type="evidence at protein level"/>
<reference key="1">
    <citation type="journal article" date="1995" name="DNA Res.">
        <title>Sequence analysis of the genome of the unicellular cyanobacterium Synechocystis sp. strain PCC6803. I. Sequence features in the 1 Mb region from map positions 64% to 92% of the genome.</title>
        <authorList>
            <person name="Kaneko T."/>
            <person name="Tanaka A."/>
            <person name="Sato S."/>
            <person name="Kotani H."/>
            <person name="Sazuka T."/>
            <person name="Miyajima N."/>
            <person name="Sugiura M."/>
            <person name="Tabata S."/>
        </authorList>
    </citation>
    <scope>NUCLEOTIDE SEQUENCE [LARGE SCALE GENOMIC DNA]</scope>
    <source>
        <strain>ATCC 27184 / PCC 6803 / N-1</strain>
    </source>
</reference>
<reference key="2">
    <citation type="journal article" date="1996" name="DNA Res.">
        <title>Sequence analysis of the genome of the unicellular cyanobacterium Synechocystis sp. strain PCC6803. II. Sequence determination of the entire genome and assignment of potential protein-coding regions.</title>
        <authorList>
            <person name="Kaneko T."/>
            <person name="Sato S."/>
            <person name="Kotani H."/>
            <person name="Tanaka A."/>
            <person name="Asamizu E."/>
            <person name="Nakamura Y."/>
            <person name="Miyajima N."/>
            <person name="Hirosawa M."/>
            <person name="Sugiura M."/>
            <person name="Sasamoto S."/>
            <person name="Kimura T."/>
            <person name="Hosouchi T."/>
            <person name="Matsuno A."/>
            <person name="Muraki A."/>
            <person name="Nakazaki N."/>
            <person name="Naruo K."/>
            <person name="Okumura S."/>
            <person name="Shimpo S."/>
            <person name="Takeuchi C."/>
            <person name="Wada T."/>
            <person name="Watanabe A."/>
            <person name="Yamada M."/>
            <person name="Yasuda M."/>
            <person name="Tabata S."/>
        </authorList>
    </citation>
    <scope>NUCLEOTIDE SEQUENCE [LARGE SCALE GENOMIC DNA]</scope>
    <source>
        <strain>ATCC 27184 / PCC 6803 / Kazusa</strain>
    </source>
</reference>
<reference key="3">
    <citation type="journal article" date="2009" name="Proc. Natl. Acad. Sci. U.S.A.">
        <title>A dedicated thioesterase of the Hotdog-fold family is required for the biosynthesis of the naphthoquinone ring of vitamin K1.</title>
        <authorList>
            <person name="Widhalm J.R."/>
            <person name="van Oostende C."/>
            <person name="Furt F."/>
            <person name="Basset G.J.C."/>
        </authorList>
    </citation>
    <scope>FUNCTION IN PHYLLOQUINONE BIOSYNTHESIS</scope>
    <scope>CATALYTIC ACTIVITY</scope>
    <scope>PATHWAY</scope>
    <scope>SUBSTRATE SPECIFICITY</scope>
    <scope>DISRUPTION PHENOTYPE</scope>
</reference>
<sequence>MGTFTYERQVYLADTDGAGVVYFNQFLQMCHEAYESWLSSEHLSLQNIISVGDFALPLVHASIDFFAPAHCGDRLLVNLTITQASAHRFCCDYEISQAESAQLLARAQTHHVCIALPERKKAPLPQPWQTAICDLDHP</sequence>
<dbReference type="EC" id="3.1.2.28" evidence="1"/>
<dbReference type="EMBL" id="BA000022">
    <property type="protein sequence ID" value="BAA10428.1"/>
    <property type="molecule type" value="Genomic_DNA"/>
</dbReference>
<dbReference type="PIR" id="S76582">
    <property type="entry name" value="S76582"/>
</dbReference>
<dbReference type="PDB" id="4K00">
    <property type="method" value="X-ray"/>
    <property type="resolution" value="1.90 A"/>
    <property type="chains" value="A/B=1-138"/>
</dbReference>
<dbReference type="PDBsum" id="4K00"/>
<dbReference type="SMR" id="Q55777"/>
<dbReference type="IntAct" id="Q55777">
    <property type="interactions" value="4"/>
</dbReference>
<dbReference type="STRING" id="1148.gene:10499929"/>
<dbReference type="PaxDb" id="1148-1001691"/>
<dbReference type="EnsemblBacteria" id="BAA10428">
    <property type="protein sequence ID" value="BAA10428"/>
    <property type="gene ID" value="BAA10428"/>
</dbReference>
<dbReference type="KEGG" id="syn:slr0204"/>
<dbReference type="eggNOG" id="COG0824">
    <property type="taxonomic scope" value="Bacteria"/>
</dbReference>
<dbReference type="InParanoid" id="Q55777"/>
<dbReference type="PhylomeDB" id="Q55777"/>
<dbReference type="BioCyc" id="MetaCyc:MONOMER-15406"/>
<dbReference type="BRENDA" id="3.1.2.28">
    <property type="organism ID" value="382"/>
</dbReference>
<dbReference type="UniPathway" id="UPA00995"/>
<dbReference type="UniPathway" id="UPA01057">
    <property type="reaction ID" value="UER01033"/>
</dbReference>
<dbReference type="EvolutionaryTrace" id="Q55777"/>
<dbReference type="Proteomes" id="UP000001425">
    <property type="component" value="Chromosome"/>
</dbReference>
<dbReference type="GO" id="GO:0061522">
    <property type="term" value="F:1,4-dihydroxy-2-naphthoyl-CoA thioesterase activity"/>
    <property type="evidence" value="ECO:0007669"/>
    <property type="project" value="UniProtKB-EC"/>
</dbReference>
<dbReference type="GO" id="GO:0047617">
    <property type="term" value="F:fatty acyl-CoA hydrolase activity"/>
    <property type="evidence" value="ECO:0000314"/>
    <property type="project" value="UniProtKB"/>
</dbReference>
<dbReference type="GO" id="GO:0042372">
    <property type="term" value="P:phylloquinone biosynthetic process"/>
    <property type="evidence" value="ECO:0000315"/>
    <property type="project" value="UniProtKB"/>
</dbReference>
<dbReference type="CDD" id="cd00586">
    <property type="entry name" value="4HBT"/>
    <property type="match status" value="1"/>
</dbReference>
<dbReference type="Gene3D" id="3.10.129.10">
    <property type="entry name" value="Hotdog Thioesterase"/>
    <property type="match status" value="1"/>
</dbReference>
<dbReference type="HAMAP" id="MF_02101">
    <property type="entry name" value="DHNA_CoA_hydrolase"/>
    <property type="match status" value="1"/>
</dbReference>
<dbReference type="InterPro" id="IPR050563">
    <property type="entry name" value="4-hydroxybenzoyl-CoA_TE"/>
</dbReference>
<dbReference type="InterPro" id="IPR022829">
    <property type="entry name" value="DHNA_CoA_hydrolase"/>
</dbReference>
<dbReference type="InterPro" id="IPR008272">
    <property type="entry name" value="HB-CoA_thioesterase_AS"/>
</dbReference>
<dbReference type="InterPro" id="IPR029069">
    <property type="entry name" value="HotDog_dom_sf"/>
</dbReference>
<dbReference type="InterPro" id="IPR006684">
    <property type="entry name" value="YbgC/YbaW"/>
</dbReference>
<dbReference type="PANTHER" id="PTHR31793">
    <property type="entry name" value="4-HYDROXYBENZOYL-COA THIOESTERASE FAMILY MEMBER"/>
    <property type="match status" value="1"/>
</dbReference>
<dbReference type="PANTHER" id="PTHR31793:SF37">
    <property type="entry name" value="ACYL-COA THIOESTER HYDROLASE YBGC"/>
    <property type="match status" value="1"/>
</dbReference>
<dbReference type="Pfam" id="PF13279">
    <property type="entry name" value="4HBT_2"/>
    <property type="match status" value="1"/>
</dbReference>
<dbReference type="PIRSF" id="PIRSF003230">
    <property type="entry name" value="YbgC"/>
    <property type="match status" value="1"/>
</dbReference>
<dbReference type="SUPFAM" id="SSF54637">
    <property type="entry name" value="Thioesterase/thiol ester dehydrase-isomerase"/>
    <property type="match status" value="1"/>
</dbReference>
<dbReference type="PROSITE" id="PS01328">
    <property type="entry name" value="4HBCOA_THIOESTERASE"/>
    <property type="match status" value="1"/>
</dbReference>
<organism>
    <name type="scientific">Synechocystis sp. (strain ATCC 27184 / PCC 6803 / Kazusa)</name>
    <dbReference type="NCBI Taxonomy" id="1111708"/>
    <lineage>
        <taxon>Bacteria</taxon>
        <taxon>Bacillati</taxon>
        <taxon>Cyanobacteriota</taxon>
        <taxon>Cyanophyceae</taxon>
        <taxon>Synechococcales</taxon>
        <taxon>Merismopediaceae</taxon>
        <taxon>Synechocystis</taxon>
    </lineage>
</organism>
<feature type="chain" id="PRO_0000087769" description="1,4-dihydroxy-2-naphthoyl-CoA hydrolase">
    <location>
        <begin position="1"/>
        <end position="138"/>
    </location>
</feature>
<feature type="active site" evidence="1">
    <location>
        <position position="16"/>
    </location>
</feature>
<feature type="strand" evidence="3">
    <location>
        <begin position="3"/>
        <end position="9"/>
    </location>
</feature>
<feature type="helix" evidence="3">
    <location>
        <begin position="12"/>
        <end position="14"/>
    </location>
</feature>
<feature type="strand" evidence="3">
    <location>
        <begin position="19"/>
        <end position="21"/>
    </location>
</feature>
<feature type="helix" evidence="3">
    <location>
        <begin position="23"/>
        <end position="40"/>
    </location>
</feature>
<feature type="helix" evidence="3">
    <location>
        <begin position="45"/>
        <end position="51"/>
    </location>
</feature>
<feature type="strand" evidence="3">
    <location>
        <begin position="53"/>
        <end position="55"/>
    </location>
</feature>
<feature type="strand" evidence="3">
    <location>
        <begin position="58"/>
        <end position="65"/>
    </location>
</feature>
<feature type="strand" evidence="3">
    <location>
        <begin position="74"/>
        <end position="83"/>
    </location>
</feature>
<feature type="strand" evidence="3">
    <location>
        <begin position="85"/>
        <end position="97"/>
    </location>
</feature>
<feature type="turn" evidence="3">
    <location>
        <begin position="98"/>
        <end position="100"/>
    </location>
</feature>
<feature type="strand" evidence="3">
    <location>
        <begin position="103"/>
        <end position="112"/>
    </location>
</feature>
<feature type="turn" evidence="3">
    <location>
        <begin position="116"/>
        <end position="119"/>
    </location>
</feature>
<feature type="helix" evidence="3">
    <location>
        <begin position="126"/>
        <end position="133"/>
    </location>
</feature>
<keyword id="KW-0002">3D-structure</keyword>
<keyword id="KW-0378">Hydrolase</keyword>
<keyword id="KW-1185">Reference proteome</keyword>
<comment type="function">
    <text evidence="2">Catalyzes the specific hydrolysis of 1,4-dihydroxy-2-naphthoyl-CoA (DHNA-CoA) to 1,4-dihydroxy-2-naphthoate (DHNA), a reaction involved in phylloquinone (vitamin K1) biosynthesis. Is not active on benzoyl-CoA, phenylacetyl-CoA and aliphatic acyl-CoA thioesters.</text>
</comment>
<comment type="catalytic activity">
    <reaction evidence="1 2">
        <text>1,4-dihydroxy-2-naphthoyl-CoA + H2O = 1,4-dihydroxy-2-naphthoate + CoA + H(+)</text>
        <dbReference type="Rhea" id="RHEA:26309"/>
        <dbReference type="ChEBI" id="CHEBI:11173"/>
        <dbReference type="ChEBI" id="CHEBI:15377"/>
        <dbReference type="ChEBI" id="CHEBI:15378"/>
        <dbReference type="ChEBI" id="CHEBI:57287"/>
        <dbReference type="ChEBI" id="CHEBI:58897"/>
        <dbReference type="EC" id="3.1.2.28"/>
    </reaction>
</comment>
<comment type="pathway">
    <text evidence="1 2">Cofactor biosynthesis; phylloquinone biosynthesis.</text>
</comment>
<comment type="pathway">
    <text evidence="1">Quinol/quinone metabolism; 1,4-dihydroxy-2-naphthoate biosynthesis; 1,4-dihydroxy-2-naphthoate from chorismate: step 7/7.</text>
</comment>
<comment type="disruption phenotype">
    <text evidence="2">Cells lacking this gene accumulate DHNA-CoA, lack phylloquinone, and display photosensitivity to high light intensities.</text>
</comment>
<comment type="similarity">
    <text evidence="1">Belongs to the 4-hydroxybenzoyl-CoA thioesterase family. DHNA-CoA hydrolase subfamily.</text>
</comment>
<protein>
    <recommendedName>
        <fullName evidence="1">1,4-dihydroxy-2-naphthoyl-CoA hydrolase</fullName>
        <shortName evidence="1">DHNA-CoA hydrolase</shortName>
        <ecNumber evidence="1">3.1.2.28</ecNumber>
    </recommendedName>
    <alternativeName>
        <fullName evidence="1">DHNA-CoA thioesterase</fullName>
    </alternativeName>
</protein>
<name>DNCH_SYNY3</name>
<accession>Q55777</accession>
<evidence type="ECO:0000255" key="1">
    <source>
        <dbReference type="HAMAP-Rule" id="MF_02101"/>
    </source>
</evidence>
<evidence type="ECO:0000269" key="2">
    <source>
    </source>
</evidence>
<evidence type="ECO:0007829" key="3">
    <source>
        <dbReference type="PDB" id="4K00"/>
    </source>
</evidence>
<gene>
    <name type="ordered locus">slr0204</name>
</gene>